<sequence>MIRAFLVVALASVAVFSAPIPEVPQNFDDIPAEYKGLIPAEVAEHLKAITAEEKAALKELAQNHKEYKTEEEFKAALKEKSPSLYEKAGKLEALLTAKFEKLDATAQALVKKIIAKGRELHQQYLAGDKPTLDSLKELAKGYIAEYKALSDDAKATITAEFPILTGFFQNEKIQAIVGQYVN</sequence>
<reference key="1">
    <citation type="journal article" date="1994" name="Nature">
        <title>2.2 Mb of contiguous nucleotide sequence from chromosome III of C. elegans.</title>
        <authorList>
            <person name="Wilson R."/>
            <person name="Ainscough R."/>
            <person name="Anderson K."/>
            <person name="Baynes C."/>
            <person name="Berks M."/>
            <person name="Bonfield J."/>
            <person name="Burton J."/>
            <person name="Connell M."/>
            <person name="Copsey T."/>
            <person name="Cooper J."/>
            <person name="Coulson A."/>
            <person name="Craxton M."/>
            <person name="Dear S."/>
            <person name="Du Z."/>
            <person name="Durbin R."/>
            <person name="Favello A."/>
            <person name="Fraser A."/>
            <person name="Fulton L."/>
            <person name="Gardner A."/>
            <person name="Green P."/>
            <person name="Hawkins T."/>
            <person name="Hillier L."/>
            <person name="Jier M."/>
            <person name="Johnston L."/>
            <person name="Jones M."/>
            <person name="Kershaw J."/>
            <person name="Kirsten J."/>
            <person name="Laisster N."/>
            <person name="Latreille P."/>
            <person name="Lightning J."/>
            <person name="Lloyd C."/>
            <person name="Mortimore B."/>
            <person name="O'Callaghan M."/>
            <person name="Parsons J."/>
            <person name="Percy C."/>
            <person name="Rifken L."/>
            <person name="Roopra A."/>
            <person name="Saunders D."/>
            <person name="Shownkeen R."/>
            <person name="Sims M."/>
            <person name="Smaldon N."/>
            <person name="Smith A."/>
            <person name="Smith M."/>
            <person name="Sonnhammer E."/>
            <person name="Staden R."/>
            <person name="Sulston J."/>
            <person name="Thierry-Mieg J."/>
            <person name="Thomas K."/>
            <person name="Vaudin M."/>
            <person name="Vaughan K."/>
            <person name="Waterston R."/>
            <person name="Watson A."/>
            <person name="Weinstock L."/>
            <person name="Wilkinson-Sproat J."/>
            <person name="Wohldman P."/>
        </authorList>
    </citation>
    <scope>NUCLEOTIDE SEQUENCE [LARGE SCALE GENOMIC DNA]</scope>
    <source>
        <strain>Bristol N2</strain>
    </source>
</reference>
<reference key="2">
    <citation type="journal article" date="1998" name="Science">
        <title>Genome sequence of the nematode C. elegans: a platform for investigating biology.</title>
        <authorList>
            <consortium name="The C. elegans sequencing consortium"/>
        </authorList>
    </citation>
    <scope>NUCLEOTIDE SEQUENCE [LARGE SCALE GENOMIC DNA]</scope>
    <source>
        <strain>Bristol N2</strain>
    </source>
</reference>
<keyword id="KW-0175">Coiled coil</keyword>
<keyword id="KW-0446">Lipid-binding</keyword>
<keyword id="KW-1185">Reference proteome</keyword>
<keyword id="KW-0964">Secreted</keyword>
<keyword id="KW-0732">Signal</keyword>
<name>FAR2_CAEEL</name>
<dbReference type="EMBL" id="Z19555">
    <property type="protein sequence ID" value="CAA79617.1"/>
    <property type="molecule type" value="Genomic_DNA"/>
</dbReference>
<dbReference type="PIR" id="S28311">
    <property type="entry name" value="S28311"/>
</dbReference>
<dbReference type="RefSeq" id="NP_499011.1">
    <property type="nucleotide sequence ID" value="NM_066610.8"/>
</dbReference>
<dbReference type="SMR" id="P34383"/>
<dbReference type="BioGRID" id="41483">
    <property type="interactions" value="23"/>
</dbReference>
<dbReference type="DIP" id="DIP-24469N"/>
<dbReference type="FunCoup" id="P34383">
    <property type="interactions" value="87"/>
</dbReference>
<dbReference type="IntAct" id="P34383">
    <property type="interactions" value="2"/>
</dbReference>
<dbReference type="MINT" id="P34383"/>
<dbReference type="STRING" id="6239.F02A9.3.2"/>
<dbReference type="PaxDb" id="6239-F02A9.3.3"/>
<dbReference type="PeptideAtlas" id="P34383"/>
<dbReference type="EnsemblMetazoa" id="F02A9.3.1">
    <property type="protein sequence ID" value="F02A9.3.1"/>
    <property type="gene ID" value="WBGene00001386"/>
</dbReference>
<dbReference type="GeneID" id="176284"/>
<dbReference type="KEGG" id="cel:CELE_F02A9.3"/>
<dbReference type="UCSC" id="F02A9.3.1">
    <property type="organism name" value="c. elegans"/>
</dbReference>
<dbReference type="AGR" id="WB:WBGene00001386"/>
<dbReference type="CTD" id="176284"/>
<dbReference type="WormBase" id="F02A9.3">
    <property type="protein sequence ID" value="CE00134"/>
    <property type="gene ID" value="WBGene00001386"/>
    <property type="gene designation" value="far-2"/>
</dbReference>
<dbReference type="eggNOG" id="ENOG502R1CS">
    <property type="taxonomic scope" value="Eukaryota"/>
</dbReference>
<dbReference type="GeneTree" id="ENSGT00970000195891"/>
<dbReference type="HOGENOM" id="CLU_117803_0_0_1"/>
<dbReference type="InParanoid" id="P34383"/>
<dbReference type="OMA" id="EMYDITR"/>
<dbReference type="OrthoDB" id="5808308at2759"/>
<dbReference type="PhylomeDB" id="P34383"/>
<dbReference type="PRO" id="PR:P34383"/>
<dbReference type="Proteomes" id="UP000001940">
    <property type="component" value="Chromosome III"/>
</dbReference>
<dbReference type="Bgee" id="WBGene00001386">
    <property type="expression patterns" value="Expressed in adult organism and 4 other cell types or tissues"/>
</dbReference>
<dbReference type="GO" id="GO:0005576">
    <property type="term" value="C:extracellular region"/>
    <property type="evidence" value="ECO:0007669"/>
    <property type="project" value="UniProtKB-SubCell"/>
</dbReference>
<dbReference type="GO" id="GO:0005504">
    <property type="term" value="F:fatty acid binding"/>
    <property type="evidence" value="ECO:0000250"/>
    <property type="project" value="WormBase"/>
</dbReference>
<dbReference type="GO" id="GO:0019841">
    <property type="term" value="F:retinol binding"/>
    <property type="evidence" value="ECO:0000250"/>
    <property type="project" value="WormBase"/>
</dbReference>
<dbReference type="FunFam" id="1.20.120.1100:FF:000002">
    <property type="entry name" value="Fatty-acid and retinol-binding protein 2"/>
    <property type="match status" value="1"/>
</dbReference>
<dbReference type="Gene3D" id="1.20.120.1100">
    <property type="match status" value="1"/>
</dbReference>
<dbReference type="InterPro" id="IPR008632">
    <property type="entry name" value="Gp-FAR-1"/>
</dbReference>
<dbReference type="PANTHER" id="PTHR31418">
    <property type="entry name" value="FATTY-ACID AND RETINOL-BINDING PROTEIN 1"/>
    <property type="match status" value="1"/>
</dbReference>
<dbReference type="PANTHER" id="PTHR31418:SF19">
    <property type="entry name" value="FATTY-ACID AND RETINOL-BINDING PROTEIN 1-RELATED"/>
    <property type="match status" value="1"/>
</dbReference>
<dbReference type="Pfam" id="PF05823">
    <property type="entry name" value="Gp-FAR-1"/>
    <property type="match status" value="1"/>
</dbReference>
<comment type="function">
    <text evidence="1">Probably binds lipids.</text>
</comment>
<comment type="subcellular location">
    <subcellularLocation>
        <location evidence="1">Secreted</location>
    </subcellularLocation>
</comment>
<comment type="similarity">
    <text evidence="3">Belongs to the fatty-acid and retinol-binding protein (FARBP) family.</text>
</comment>
<evidence type="ECO:0000250" key="1"/>
<evidence type="ECO:0000255" key="2"/>
<evidence type="ECO:0000305" key="3"/>
<protein>
    <recommendedName>
        <fullName>Fatty-acid and retinol-binding protein 2</fullName>
    </recommendedName>
</protein>
<feature type="signal peptide" evidence="2">
    <location>
        <begin position="1"/>
        <end position="17"/>
    </location>
</feature>
<feature type="chain" id="PRO_0000008768" description="Fatty-acid and retinol-binding protein 2">
    <location>
        <begin position="18"/>
        <end position="182"/>
    </location>
</feature>
<feature type="coiled-coil region" evidence="2">
    <location>
        <begin position="46"/>
        <end position="73"/>
    </location>
</feature>
<feature type="coiled-coil region" evidence="2">
    <location>
        <begin position="131"/>
        <end position="152"/>
    </location>
</feature>
<organism>
    <name type="scientific">Caenorhabditis elegans</name>
    <dbReference type="NCBI Taxonomy" id="6239"/>
    <lineage>
        <taxon>Eukaryota</taxon>
        <taxon>Metazoa</taxon>
        <taxon>Ecdysozoa</taxon>
        <taxon>Nematoda</taxon>
        <taxon>Chromadorea</taxon>
        <taxon>Rhabditida</taxon>
        <taxon>Rhabditina</taxon>
        <taxon>Rhabditomorpha</taxon>
        <taxon>Rhabditoidea</taxon>
        <taxon>Rhabditidae</taxon>
        <taxon>Peloderinae</taxon>
        <taxon>Caenorhabditis</taxon>
    </lineage>
</organism>
<proteinExistence type="inferred from homology"/>
<gene>
    <name type="primary">far-2</name>
    <name type="ORF">F02A9.3</name>
</gene>
<accession>P34383</accession>